<reference key="1">
    <citation type="submission" date="2007-10" db="EMBL/GenBank/DDBJ databases">
        <title>Complete sequence of Shewanella pealeana ATCC 700345.</title>
        <authorList>
            <consortium name="US DOE Joint Genome Institute"/>
            <person name="Copeland A."/>
            <person name="Lucas S."/>
            <person name="Lapidus A."/>
            <person name="Barry K."/>
            <person name="Glavina del Rio T."/>
            <person name="Dalin E."/>
            <person name="Tice H."/>
            <person name="Pitluck S."/>
            <person name="Chertkov O."/>
            <person name="Brettin T."/>
            <person name="Bruce D."/>
            <person name="Detter J.C."/>
            <person name="Han C."/>
            <person name="Schmutz J."/>
            <person name="Larimer F."/>
            <person name="Land M."/>
            <person name="Hauser L."/>
            <person name="Kyrpides N."/>
            <person name="Kim E."/>
            <person name="Zhao J.-S.Z."/>
            <person name="Manno D."/>
            <person name="Hawari J."/>
            <person name="Richardson P."/>
        </authorList>
    </citation>
    <scope>NUCLEOTIDE SEQUENCE [LARGE SCALE GENOMIC DNA]</scope>
    <source>
        <strain>ATCC 700345 / ANG-SQ1</strain>
    </source>
</reference>
<keyword id="KW-0143">Chaperone</keyword>
<keyword id="KW-1185">Reference proteome</keyword>
<proteinExistence type="inferred from homology"/>
<feature type="chain" id="PRO_1000083041" description="Co-chaperone protein HscB homolog">
    <location>
        <begin position="1"/>
        <end position="174"/>
    </location>
</feature>
<feature type="domain" description="J" evidence="1">
    <location>
        <begin position="2"/>
        <end position="74"/>
    </location>
</feature>
<organism>
    <name type="scientific">Shewanella pealeana (strain ATCC 700345 / ANG-SQ1)</name>
    <dbReference type="NCBI Taxonomy" id="398579"/>
    <lineage>
        <taxon>Bacteria</taxon>
        <taxon>Pseudomonadati</taxon>
        <taxon>Pseudomonadota</taxon>
        <taxon>Gammaproteobacteria</taxon>
        <taxon>Alteromonadales</taxon>
        <taxon>Shewanellaceae</taxon>
        <taxon>Shewanella</taxon>
    </lineage>
</organism>
<protein>
    <recommendedName>
        <fullName evidence="1">Co-chaperone protein HscB homolog</fullName>
    </recommendedName>
</protein>
<evidence type="ECO:0000255" key="1">
    <source>
        <dbReference type="HAMAP-Rule" id="MF_00682"/>
    </source>
</evidence>
<dbReference type="EMBL" id="CP000851">
    <property type="protein sequence ID" value="ABV86816.1"/>
    <property type="molecule type" value="Genomic_DNA"/>
</dbReference>
<dbReference type="RefSeq" id="WP_012154742.1">
    <property type="nucleotide sequence ID" value="NC_009901.1"/>
</dbReference>
<dbReference type="SMR" id="A8H2M9"/>
<dbReference type="STRING" id="398579.Spea_1491"/>
<dbReference type="KEGG" id="spl:Spea_1491"/>
<dbReference type="eggNOG" id="COG1076">
    <property type="taxonomic scope" value="Bacteria"/>
</dbReference>
<dbReference type="HOGENOM" id="CLU_068529_2_0_6"/>
<dbReference type="OrthoDB" id="287587at2"/>
<dbReference type="Proteomes" id="UP000002608">
    <property type="component" value="Chromosome"/>
</dbReference>
<dbReference type="GO" id="GO:1990230">
    <property type="term" value="C:iron-sulfur cluster transfer complex"/>
    <property type="evidence" value="ECO:0007669"/>
    <property type="project" value="TreeGrafter"/>
</dbReference>
<dbReference type="GO" id="GO:0001671">
    <property type="term" value="F:ATPase activator activity"/>
    <property type="evidence" value="ECO:0007669"/>
    <property type="project" value="InterPro"/>
</dbReference>
<dbReference type="GO" id="GO:0051087">
    <property type="term" value="F:protein-folding chaperone binding"/>
    <property type="evidence" value="ECO:0007669"/>
    <property type="project" value="InterPro"/>
</dbReference>
<dbReference type="GO" id="GO:0044571">
    <property type="term" value="P:[2Fe-2S] cluster assembly"/>
    <property type="evidence" value="ECO:0007669"/>
    <property type="project" value="InterPro"/>
</dbReference>
<dbReference type="GO" id="GO:0051259">
    <property type="term" value="P:protein complex oligomerization"/>
    <property type="evidence" value="ECO:0007669"/>
    <property type="project" value="InterPro"/>
</dbReference>
<dbReference type="GO" id="GO:0006457">
    <property type="term" value="P:protein folding"/>
    <property type="evidence" value="ECO:0007669"/>
    <property type="project" value="UniProtKB-UniRule"/>
</dbReference>
<dbReference type="CDD" id="cd06257">
    <property type="entry name" value="DnaJ"/>
    <property type="match status" value="1"/>
</dbReference>
<dbReference type="Gene3D" id="1.10.287.110">
    <property type="entry name" value="DnaJ domain"/>
    <property type="match status" value="1"/>
</dbReference>
<dbReference type="Gene3D" id="1.20.1280.20">
    <property type="entry name" value="HscB, C-terminal domain"/>
    <property type="match status" value="1"/>
</dbReference>
<dbReference type="HAMAP" id="MF_00682">
    <property type="entry name" value="HscB"/>
    <property type="match status" value="1"/>
</dbReference>
<dbReference type="InterPro" id="IPR001623">
    <property type="entry name" value="DnaJ_domain"/>
</dbReference>
<dbReference type="InterPro" id="IPR004640">
    <property type="entry name" value="HscB"/>
</dbReference>
<dbReference type="InterPro" id="IPR036386">
    <property type="entry name" value="HscB_C_sf"/>
</dbReference>
<dbReference type="InterPro" id="IPR009073">
    <property type="entry name" value="HscB_oligo_C"/>
</dbReference>
<dbReference type="InterPro" id="IPR036869">
    <property type="entry name" value="J_dom_sf"/>
</dbReference>
<dbReference type="NCBIfam" id="TIGR00714">
    <property type="entry name" value="hscB"/>
    <property type="match status" value="1"/>
</dbReference>
<dbReference type="NCBIfam" id="NF003449">
    <property type="entry name" value="PRK05014.1"/>
    <property type="match status" value="1"/>
</dbReference>
<dbReference type="PANTHER" id="PTHR14021">
    <property type="entry name" value="IRON-SULFUR CLUSTER CO-CHAPERONE PROTEIN HSCB"/>
    <property type="match status" value="1"/>
</dbReference>
<dbReference type="PANTHER" id="PTHR14021:SF15">
    <property type="entry name" value="IRON-SULFUR CLUSTER CO-CHAPERONE PROTEIN HSCB"/>
    <property type="match status" value="1"/>
</dbReference>
<dbReference type="Pfam" id="PF07743">
    <property type="entry name" value="HSCB_C"/>
    <property type="match status" value="1"/>
</dbReference>
<dbReference type="SMART" id="SM00271">
    <property type="entry name" value="DnaJ"/>
    <property type="match status" value="1"/>
</dbReference>
<dbReference type="SUPFAM" id="SSF46565">
    <property type="entry name" value="Chaperone J-domain"/>
    <property type="match status" value="1"/>
</dbReference>
<dbReference type="SUPFAM" id="SSF47144">
    <property type="entry name" value="HSC20 (HSCB), C-terminal oligomerisation domain"/>
    <property type="match status" value="1"/>
</dbReference>
<dbReference type="PROSITE" id="PS50076">
    <property type="entry name" value="DNAJ_2"/>
    <property type="match status" value="1"/>
</dbReference>
<name>HSCB_SHEPA</name>
<gene>
    <name evidence="1" type="primary">hscB</name>
    <name type="ordered locus">Spea_1491</name>
</gene>
<sequence length="174" mass="20251">MNYFELFSLLPSYDVDTALLADRYRELQRAVHPDKFANASEQDKRLSVQRTAQINDAFQTLKNPIQRAEHLLALKGLELSHESTTLKDTQFLMQQMDWRESLEEIKHSDDPDSEIAELYDSFEQYAKHITAELKLLLVSELEADHLQAADQIRKLKFMAKLQDELTRVEDALLD</sequence>
<comment type="function">
    <text evidence="1">Co-chaperone involved in the maturation of iron-sulfur cluster-containing proteins. Seems to help targeting proteins to be folded toward HscA.</text>
</comment>
<comment type="subunit">
    <text evidence="1">Interacts with HscA and stimulates its ATPase activity.</text>
</comment>
<comment type="similarity">
    <text evidence="1">Belongs to the HscB family.</text>
</comment>
<accession>A8H2M9</accession>